<protein>
    <recommendedName>
        <fullName evidence="1">Large ribosomal subunit protein bL25</fullName>
    </recommendedName>
    <alternativeName>
        <fullName evidence="2">50S ribosomal protein L25</fullName>
    </alternativeName>
    <alternativeName>
        <fullName evidence="1">General stress protein CTC</fullName>
    </alternativeName>
</protein>
<sequence>MAGEIPDFQAEVRTGTGKGAARQARREGYVPGIVYGGGQEPLSINVKYNDLLNRLKKGRFLQTLFNLKVEGQEDVRVICRGVQRDVVKDLPTHVDFMRLRRTSRINLFIHVTFENHDQAPGLKRGGTLTVVRPEVELEVTAGDIPDHITVDLTGKQIGDVIHIQDIALPEGAVPTINRNFVIANISAPSGLRSSDNEEEAAEA</sequence>
<proteinExistence type="inferred from homology"/>
<organism>
    <name type="scientific">Cereibacter sphaeroides (strain ATCC 17025 / ATH 2.4.3)</name>
    <name type="common">Rhodobacter sphaeroides</name>
    <dbReference type="NCBI Taxonomy" id="349102"/>
    <lineage>
        <taxon>Bacteria</taxon>
        <taxon>Pseudomonadati</taxon>
        <taxon>Pseudomonadota</taxon>
        <taxon>Alphaproteobacteria</taxon>
        <taxon>Rhodobacterales</taxon>
        <taxon>Paracoccaceae</taxon>
        <taxon>Cereibacter</taxon>
    </lineage>
</organism>
<accession>A4WPE3</accession>
<keyword id="KW-0687">Ribonucleoprotein</keyword>
<keyword id="KW-0689">Ribosomal protein</keyword>
<keyword id="KW-0694">RNA-binding</keyword>
<keyword id="KW-0699">rRNA-binding</keyword>
<feature type="chain" id="PRO_1000052928" description="Large ribosomal subunit protein bL25">
    <location>
        <begin position="1"/>
        <end position="203"/>
    </location>
</feature>
<gene>
    <name evidence="1" type="primary">rplY</name>
    <name evidence="1" type="synonym">ctc</name>
    <name type="ordered locus">Rsph17025_0351</name>
</gene>
<comment type="function">
    <text evidence="1">This is one of the proteins that binds to the 5S RNA in the ribosome where it forms part of the central protuberance.</text>
</comment>
<comment type="subunit">
    <text evidence="1">Part of the 50S ribosomal subunit; part of the 5S rRNA/L5/L18/L25 subcomplex. Contacts the 5S rRNA. Binds to the 5S rRNA independently of L5 and L18.</text>
</comment>
<comment type="similarity">
    <text evidence="1">Belongs to the bacterial ribosomal protein bL25 family. CTC subfamily.</text>
</comment>
<dbReference type="EMBL" id="CP000661">
    <property type="protein sequence ID" value="ABP69257.1"/>
    <property type="molecule type" value="Genomic_DNA"/>
</dbReference>
<dbReference type="SMR" id="A4WPE3"/>
<dbReference type="STRING" id="349102.Rsph17025_0351"/>
<dbReference type="KEGG" id="rsq:Rsph17025_0351"/>
<dbReference type="eggNOG" id="COG1825">
    <property type="taxonomic scope" value="Bacteria"/>
</dbReference>
<dbReference type="HOGENOM" id="CLU_075939_0_0_5"/>
<dbReference type="BioCyc" id="RSPH349102:G1G8M-358-MONOMER"/>
<dbReference type="GO" id="GO:0022625">
    <property type="term" value="C:cytosolic large ribosomal subunit"/>
    <property type="evidence" value="ECO:0007669"/>
    <property type="project" value="TreeGrafter"/>
</dbReference>
<dbReference type="GO" id="GO:0008097">
    <property type="term" value="F:5S rRNA binding"/>
    <property type="evidence" value="ECO:0007669"/>
    <property type="project" value="InterPro"/>
</dbReference>
<dbReference type="GO" id="GO:0003735">
    <property type="term" value="F:structural constituent of ribosome"/>
    <property type="evidence" value="ECO:0007669"/>
    <property type="project" value="InterPro"/>
</dbReference>
<dbReference type="GO" id="GO:0006412">
    <property type="term" value="P:translation"/>
    <property type="evidence" value="ECO:0007669"/>
    <property type="project" value="UniProtKB-UniRule"/>
</dbReference>
<dbReference type="CDD" id="cd00495">
    <property type="entry name" value="Ribosomal_L25_TL5_CTC"/>
    <property type="match status" value="1"/>
</dbReference>
<dbReference type="Gene3D" id="2.170.120.20">
    <property type="entry name" value="Ribosomal protein L25, beta domain"/>
    <property type="match status" value="1"/>
</dbReference>
<dbReference type="Gene3D" id="2.40.240.10">
    <property type="entry name" value="Ribosomal Protein L25, Chain P"/>
    <property type="match status" value="1"/>
</dbReference>
<dbReference type="HAMAP" id="MF_01334">
    <property type="entry name" value="Ribosomal_bL25_CTC"/>
    <property type="match status" value="1"/>
</dbReference>
<dbReference type="InterPro" id="IPR020056">
    <property type="entry name" value="Rbsml_bL25/Gln-tRNA_synth_N"/>
</dbReference>
<dbReference type="InterPro" id="IPR011035">
    <property type="entry name" value="Ribosomal_bL25/Gln-tRNA_synth"/>
</dbReference>
<dbReference type="InterPro" id="IPR020057">
    <property type="entry name" value="Ribosomal_bL25_b-dom"/>
</dbReference>
<dbReference type="InterPro" id="IPR037121">
    <property type="entry name" value="Ribosomal_bL25_C"/>
</dbReference>
<dbReference type="InterPro" id="IPR001021">
    <property type="entry name" value="Ribosomal_bL25_long"/>
</dbReference>
<dbReference type="InterPro" id="IPR029751">
    <property type="entry name" value="Ribosomal_L25_dom"/>
</dbReference>
<dbReference type="InterPro" id="IPR020930">
    <property type="entry name" value="Ribosomal_uL5_bac-type"/>
</dbReference>
<dbReference type="NCBIfam" id="TIGR00731">
    <property type="entry name" value="bL25_bact_ctc"/>
    <property type="match status" value="1"/>
</dbReference>
<dbReference type="NCBIfam" id="NF004128">
    <property type="entry name" value="PRK05618.1-2"/>
    <property type="match status" value="1"/>
</dbReference>
<dbReference type="NCBIfam" id="NF004612">
    <property type="entry name" value="PRK05943.1"/>
    <property type="match status" value="1"/>
</dbReference>
<dbReference type="PANTHER" id="PTHR33284">
    <property type="entry name" value="RIBOSOMAL PROTEIN L25/GLN-TRNA SYNTHETASE, ANTI-CODON-BINDING DOMAIN-CONTAINING PROTEIN"/>
    <property type="match status" value="1"/>
</dbReference>
<dbReference type="PANTHER" id="PTHR33284:SF1">
    <property type="entry name" value="RIBOSOMAL PROTEIN L25_GLN-TRNA SYNTHETASE, ANTI-CODON-BINDING DOMAIN-CONTAINING PROTEIN"/>
    <property type="match status" value="1"/>
</dbReference>
<dbReference type="Pfam" id="PF01386">
    <property type="entry name" value="Ribosomal_L25p"/>
    <property type="match status" value="1"/>
</dbReference>
<dbReference type="Pfam" id="PF14693">
    <property type="entry name" value="Ribosomal_TL5_C"/>
    <property type="match status" value="1"/>
</dbReference>
<dbReference type="SUPFAM" id="SSF50715">
    <property type="entry name" value="Ribosomal protein L25-like"/>
    <property type="match status" value="1"/>
</dbReference>
<evidence type="ECO:0000255" key="1">
    <source>
        <dbReference type="HAMAP-Rule" id="MF_01334"/>
    </source>
</evidence>
<evidence type="ECO:0000305" key="2"/>
<name>RL25_CERS5</name>
<reference key="1">
    <citation type="submission" date="2007-04" db="EMBL/GenBank/DDBJ databases">
        <title>Complete sequence of chromosome of Rhodobacter sphaeroides ATCC 17025.</title>
        <authorList>
            <consortium name="US DOE Joint Genome Institute"/>
            <person name="Copeland A."/>
            <person name="Lucas S."/>
            <person name="Lapidus A."/>
            <person name="Barry K."/>
            <person name="Detter J.C."/>
            <person name="Glavina del Rio T."/>
            <person name="Hammon N."/>
            <person name="Israni S."/>
            <person name="Dalin E."/>
            <person name="Tice H."/>
            <person name="Pitluck S."/>
            <person name="Chertkov O."/>
            <person name="Brettin T."/>
            <person name="Bruce D."/>
            <person name="Han C."/>
            <person name="Schmutz J."/>
            <person name="Larimer F."/>
            <person name="Land M."/>
            <person name="Hauser L."/>
            <person name="Kyrpides N."/>
            <person name="Kim E."/>
            <person name="Richardson P."/>
            <person name="Mackenzie C."/>
            <person name="Choudhary M."/>
            <person name="Donohue T.J."/>
            <person name="Kaplan S."/>
        </authorList>
    </citation>
    <scope>NUCLEOTIDE SEQUENCE [LARGE SCALE GENOMIC DNA]</scope>
    <source>
        <strain>ATCC 17025 / ATH 2.4.3</strain>
    </source>
</reference>